<name>RIMP_BACHK</name>
<sequence>MDKKVTEVVEAFAQPIVEELNLELVDVEYVKEGQDWFLRVFIDSEKGVDIEECGAVSERLSEALDKEDPIPHLYFLDVSSPGAERPLKKEKDFQQAVGKQVAIKTYEPIDGEKMFEGKMLSYDGTTITLLLTIKTRKKEIQIPMDKVANARLAVTF</sequence>
<evidence type="ECO:0000255" key="1">
    <source>
        <dbReference type="HAMAP-Rule" id="MF_01077"/>
    </source>
</evidence>
<organism>
    <name type="scientific">Bacillus thuringiensis subsp. konkukian (strain 97-27)</name>
    <dbReference type="NCBI Taxonomy" id="281309"/>
    <lineage>
        <taxon>Bacteria</taxon>
        <taxon>Bacillati</taxon>
        <taxon>Bacillota</taxon>
        <taxon>Bacilli</taxon>
        <taxon>Bacillales</taxon>
        <taxon>Bacillaceae</taxon>
        <taxon>Bacillus</taxon>
        <taxon>Bacillus cereus group</taxon>
    </lineage>
</organism>
<reference key="1">
    <citation type="journal article" date="2006" name="J. Bacteriol.">
        <title>Pathogenomic sequence analysis of Bacillus cereus and Bacillus thuringiensis isolates closely related to Bacillus anthracis.</title>
        <authorList>
            <person name="Han C.S."/>
            <person name="Xie G."/>
            <person name="Challacombe J.F."/>
            <person name="Altherr M.R."/>
            <person name="Bhotika S.S."/>
            <person name="Bruce D."/>
            <person name="Campbell C.S."/>
            <person name="Campbell M.L."/>
            <person name="Chen J."/>
            <person name="Chertkov O."/>
            <person name="Cleland C."/>
            <person name="Dimitrijevic M."/>
            <person name="Doggett N.A."/>
            <person name="Fawcett J.J."/>
            <person name="Glavina T."/>
            <person name="Goodwin L.A."/>
            <person name="Hill K.K."/>
            <person name="Hitchcock P."/>
            <person name="Jackson P.J."/>
            <person name="Keim P."/>
            <person name="Kewalramani A.R."/>
            <person name="Longmire J."/>
            <person name="Lucas S."/>
            <person name="Malfatti S."/>
            <person name="McMurry K."/>
            <person name="Meincke L.J."/>
            <person name="Misra M."/>
            <person name="Moseman B.L."/>
            <person name="Mundt M."/>
            <person name="Munk A.C."/>
            <person name="Okinaka R.T."/>
            <person name="Parson-Quintana B."/>
            <person name="Reilly L.P."/>
            <person name="Richardson P."/>
            <person name="Robinson D.L."/>
            <person name="Rubin E."/>
            <person name="Saunders E."/>
            <person name="Tapia R."/>
            <person name="Tesmer J.G."/>
            <person name="Thayer N."/>
            <person name="Thompson L.S."/>
            <person name="Tice H."/>
            <person name="Ticknor L.O."/>
            <person name="Wills P.L."/>
            <person name="Brettin T.S."/>
            <person name="Gilna P."/>
        </authorList>
    </citation>
    <scope>NUCLEOTIDE SEQUENCE [LARGE SCALE GENOMIC DNA]</scope>
    <source>
        <strain>97-27</strain>
    </source>
</reference>
<proteinExistence type="inferred from homology"/>
<gene>
    <name evidence="1" type="primary">rimP</name>
    <name type="ordered locus">BT9727_3558</name>
</gene>
<accession>Q6HEZ8</accession>
<dbReference type="EMBL" id="AE017355">
    <property type="protein sequence ID" value="AAT60593.1"/>
    <property type="molecule type" value="Genomic_DNA"/>
</dbReference>
<dbReference type="RefSeq" id="WP_000359097.1">
    <property type="nucleotide sequence ID" value="NC_005957.1"/>
</dbReference>
<dbReference type="RefSeq" id="YP_037878.1">
    <property type="nucleotide sequence ID" value="NC_005957.1"/>
</dbReference>
<dbReference type="SMR" id="Q6HEZ8"/>
<dbReference type="GeneID" id="93007295"/>
<dbReference type="KEGG" id="btk:BT9727_3558"/>
<dbReference type="PATRIC" id="fig|281309.8.peg.3795"/>
<dbReference type="HOGENOM" id="CLU_070525_2_0_9"/>
<dbReference type="Proteomes" id="UP000001301">
    <property type="component" value="Chromosome"/>
</dbReference>
<dbReference type="GO" id="GO:0005829">
    <property type="term" value="C:cytosol"/>
    <property type="evidence" value="ECO:0007669"/>
    <property type="project" value="TreeGrafter"/>
</dbReference>
<dbReference type="GO" id="GO:0000028">
    <property type="term" value="P:ribosomal small subunit assembly"/>
    <property type="evidence" value="ECO:0007669"/>
    <property type="project" value="TreeGrafter"/>
</dbReference>
<dbReference type="GO" id="GO:0006412">
    <property type="term" value="P:translation"/>
    <property type="evidence" value="ECO:0007669"/>
    <property type="project" value="TreeGrafter"/>
</dbReference>
<dbReference type="CDD" id="cd01734">
    <property type="entry name" value="YlxS_C"/>
    <property type="match status" value="1"/>
</dbReference>
<dbReference type="FunFam" id="2.30.30.180:FF:000002">
    <property type="entry name" value="Ribosome maturation factor RimP"/>
    <property type="match status" value="1"/>
</dbReference>
<dbReference type="FunFam" id="3.30.300.70:FF:000001">
    <property type="entry name" value="Ribosome maturation factor RimP"/>
    <property type="match status" value="1"/>
</dbReference>
<dbReference type="Gene3D" id="2.30.30.180">
    <property type="entry name" value="Ribosome maturation factor RimP, C-terminal domain"/>
    <property type="match status" value="1"/>
</dbReference>
<dbReference type="Gene3D" id="3.30.300.70">
    <property type="entry name" value="RimP-like superfamily, N-terminal"/>
    <property type="match status" value="1"/>
</dbReference>
<dbReference type="HAMAP" id="MF_01077">
    <property type="entry name" value="RimP"/>
    <property type="match status" value="1"/>
</dbReference>
<dbReference type="InterPro" id="IPR003728">
    <property type="entry name" value="Ribosome_maturation_RimP"/>
</dbReference>
<dbReference type="InterPro" id="IPR028998">
    <property type="entry name" value="RimP_C"/>
</dbReference>
<dbReference type="InterPro" id="IPR036847">
    <property type="entry name" value="RimP_C_sf"/>
</dbReference>
<dbReference type="InterPro" id="IPR028989">
    <property type="entry name" value="RimP_N"/>
</dbReference>
<dbReference type="InterPro" id="IPR035956">
    <property type="entry name" value="RimP_N_sf"/>
</dbReference>
<dbReference type="NCBIfam" id="NF000928">
    <property type="entry name" value="PRK00092.1-2"/>
    <property type="match status" value="1"/>
</dbReference>
<dbReference type="PANTHER" id="PTHR33867">
    <property type="entry name" value="RIBOSOME MATURATION FACTOR RIMP"/>
    <property type="match status" value="1"/>
</dbReference>
<dbReference type="PANTHER" id="PTHR33867:SF1">
    <property type="entry name" value="RIBOSOME MATURATION FACTOR RIMP"/>
    <property type="match status" value="1"/>
</dbReference>
<dbReference type="Pfam" id="PF17384">
    <property type="entry name" value="DUF150_C"/>
    <property type="match status" value="1"/>
</dbReference>
<dbReference type="Pfam" id="PF02576">
    <property type="entry name" value="RimP_N"/>
    <property type="match status" value="1"/>
</dbReference>
<dbReference type="SUPFAM" id="SSF74942">
    <property type="entry name" value="YhbC-like, C-terminal domain"/>
    <property type="match status" value="1"/>
</dbReference>
<dbReference type="SUPFAM" id="SSF75420">
    <property type="entry name" value="YhbC-like, N-terminal domain"/>
    <property type="match status" value="1"/>
</dbReference>
<comment type="function">
    <text evidence="1">Required for maturation of 30S ribosomal subunits.</text>
</comment>
<comment type="subcellular location">
    <subcellularLocation>
        <location evidence="1">Cytoplasm</location>
    </subcellularLocation>
</comment>
<comment type="similarity">
    <text evidence="1">Belongs to the RimP family.</text>
</comment>
<protein>
    <recommendedName>
        <fullName evidence="1">Ribosome maturation factor RimP</fullName>
    </recommendedName>
</protein>
<keyword id="KW-0963">Cytoplasm</keyword>
<keyword id="KW-0690">Ribosome biogenesis</keyword>
<feature type="chain" id="PRO_0000229219" description="Ribosome maturation factor RimP">
    <location>
        <begin position="1"/>
        <end position="156"/>
    </location>
</feature>